<evidence type="ECO:0000250" key="1"/>
<evidence type="ECO:0000250" key="2">
    <source>
        <dbReference type="UniProtKB" id="P14324"/>
    </source>
</evidence>
<evidence type="ECO:0000250" key="3">
    <source>
        <dbReference type="UniProtKB" id="Q12051"/>
    </source>
</evidence>
<evidence type="ECO:0000305" key="4"/>
<organism>
    <name type="scientific">Geobacillus stearothermophilus</name>
    <name type="common">Bacillus stearothermophilus</name>
    <dbReference type="NCBI Taxonomy" id="1422"/>
    <lineage>
        <taxon>Bacteria</taxon>
        <taxon>Bacillati</taxon>
        <taxon>Bacillota</taxon>
        <taxon>Bacilli</taxon>
        <taxon>Bacillales</taxon>
        <taxon>Anoxybacillaceae</taxon>
        <taxon>Geobacillus</taxon>
    </lineage>
</organism>
<name>HEPS2_GEOSE</name>
<comment type="function">
    <text>Supplies heptaprenyl diphosphate, the precursor for the side chain of the isoprenoid quinone menaquinone-7 (MQ-7).</text>
</comment>
<comment type="catalytic activity">
    <reaction>
        <text>4 isopentenyl diphosphate + (2E,6E)-farnesyl diphosphate = all-trans-heptaprenyl diphosphate + 4 diphosphate</text>
        <dbReference type="Rhea" id="RHEA:27794"/>
        <dbReference type="ChEBI" id="CHEBI:33019"/>
        <dbReference type="ChEBI" id="CHEBI:58206"/>
        <dbReference type="ChEBI" id="CHEBI:128769"/>
        <dbReference type="ChEBI" id="CHEBI:175763"/>
        <dbReference type="EC" id="2.5.1.30"/>
    </reaction>
</comment>
<comment type="cofactor">
    <cofactor evidence="1">
        <name>Mg(2+)</name>
        <dbReference type="ChEBI" id="CHEBI:18420"/>
    </cofactor>
    <text evidence="1">Binds 2 Mg(2+) ions per subunit.</text>
</comment>
<comment type="subunit">
    <text>Heterodimer of component I and II.</text>
</comment>
<comment type="similarity">
    <text evidence="4">Belongs to the FPP/GGPP synthase family.</text>
</comment>
<protein>
    <recommendedName>
        <fullName>Heptaprenyl diphosphate synthase component 2</fullName>
        <shortName>HepPP synthase subunit 2</shortName>
        <ecNumber>2.5.1.30</ecNumber>
    </recommendedName>
</protein>
<dbReference type="EC" id="2.5.1.30"/>
<dbReference type="EMBL" id="D49976">
    <property type="protein sequence ID" value="BAA08725.1"/>
    <property type="molecule type" value="Genomic_DNA"/>
</dbReference>
<dbReference type="RefSeq" id="WP_033009740.1">
    <property type="nucleotide sequence ID" value="NZ_RCTK01000002.1"/>
</dbReference>
<dbReference type="SMR" id="P55785"/>
<dbReference type="GeneID" id="89611872"/>
<dbReference type="BRENDA" id="2.5.1.30">
    <property type="organism ID" value="623"/>
</dbReference>
<dbReference type="GO" id="GO:0000010">
    <property type="term" value="F:heptaprenyl diphosphate synthase activity"/>
    <property type="evidence" value="ECO:0007669"/>
    <property type="project" value="UniProtKB-EC"/>
</dbReference>
<dbReference type="GO" id="GO:0046872">
    <property type="term" value="F:metal ion binding"/>
    <property type="evidence" value="ECO:0007669"/>
    <property type="project" value="UniProtKB-KW"/>
</dbReference>
<dbReference type="GO" id="GO:0016765">
    <property type="term" value="F:transferase activity, transferring alkyl or aryl (other than methyl) groups"/>
    <property type="evidence" value="ECO:0000314"/>
    <property type="project" value="UniProtKB"/>
</dbReference>
<dbReference type="GO" id="GO:0008299">
    <property type="term" value="P:isoprenoid biosynthetic process"/>
    <property type="evidence" value="ECO:0007669"/>
    <property type="project" value="UniProtKB-KW"/>
</dbReference>
<dbReference type="GO" id="GO:0009234">
    <property type="term" value="P:menaquinone biosynthetic process"/>
    <property type="evidence" value="ECO:0000250"/>
    <property type="project" value="UniProtKB"/>
</dbReference>
<dbReference type="CDD" id="cd00685">
    <property type="entry name" value="Trans_IPPS_HT"/>
    <property type="match status" value="1"/>
</dbReference>
<dbReference type="FunFam" id="1.10.600.10:FF:000014">
    <property type="entry name" value="Heptaprenyl diphosphate synthase component II"/>
    <property type="match status" value="1"/>
</dbReference>
<dbReference type="Gene3D" id="1.10.600.10">
    <property type="entry name" value="Farnesyl Diphosphate Synthase"/>
    <property type="match status" value="1"/>
</dbReference>
<dbReference type="InterPro" id="IPR014119">
    <property type="entry name" value="GerC3_HepT"/>
</dbReference>
<dbReference type="InterPro" id="IPR008949">
    <property type="entry name" value="Isoprenoid_synthase_dom_sf"/>
</dbReference>
<dbReference type="InterPro" id="IPR000092">
    <property type="entry name" value="Polyprenyl_synt"/>
</dbReference>
<dbReference type="InterPro" id="IPR033749">
    <property type="entry name" value="Polyprenyl_synt_CS"/>
</dbReference>
<dbReference type="NCBIfam" id="TIGR02748">
    <property type="entry name" value="GerC3_HepT"/>
    <property type="match status" value="1"/>
</dbReference>
<dbReference type="PANTHER" id="PTHR12001:SF69">
    <property type="entry name" value="ALL TRANS-POLYPRENYL-DIPHOSPHATE SYNTHASE PDSS1"/>
    <property type="match status" value="1"/>
</dbReference>
<dbReference type="PANTHER" id="PTHR12001">
    <property type="entry name" value="GERANYLGERANYL PYROPHOSPHATE SYNTHASE"/>
    <property type="match status" value="1"/>
</dbReference>
<dbReference type="Pfam" id="PF00348">
    <property type="entry name" value="polyprenyl_synt"/>
    <property type="match status" value="1"/>
</dbReference>
<dbReference type="SFLD" id="SFLDS00005">
    <property type="entry name" value="Isoprenoid_Synthase_Type_I"/>
    <property type="match status" value="1"/>
</dbReference>
<dbReference type="SUPFAM" id="SSF48576">
    <property type="entry name" value="Terpenoid synthases"/>
    <property type="match status" value="1"/>
</dbReference>
<dbReference type="PROSITE" id="PS00723">
    <property type="entry name" value="POLYPRENYL_SYNTHASE_1"/>
    <property type="match status" value="1"/>
</dbReference>
<dbReference type="PROSITE" id="PS00444">
    <property type="entry name" value="POLYPRENYL_SYNTHASE_2"/>
    <property type="match status" value="1"/>
</dbReference>
<proteinExistence type="inferred from homology"/>
<keyword id="KW-0414">Isoprene biosynthesis</keyword>
<keyword id="KW-0460">Magnesium</keyword>
<keyword id="KW-0479">Metal-binding</keyword>
<keyword id="KW-0808">Transferase</keyword>
<feature type="chain" id="PRO_0000124003" description="Heptaprenyl diphosphate synthase component 2">
    <location>
        <begin position="1"/>
        <end position="320"/>
    </location>
</feature>
<feature type="binding site" evidence="2">
    <location>
        <position position="45"/>
    </location>
    <ligand>
        <name>isopentenyl diphosphate</name>
        <dbReference type="ChEBI" id="CHEBI:128769"/>
    </ligand>
</feature>
<feature type="binding site" evidence="2">
    <location>
        <position position="48"/>
    </location>
    <ligand>
        <name>isopentenyl diphosphate</name>
        <dbReference type="ChEBI" id="CHEBI:128769"/>
    </ligand>
</feature>
<feature type="binding site" evidence="3">
    <location>
        <position position="77"/>
    </location>
    <ligand>
        <name>isopentenyl diphosphate</name>
        <dbReference type="ChEBI" id="CHEBI:128769"/>
    </ligand>
</feature>
<feature type="binding site" evidence="2">
    <location>
        <position position="84"/>
    </location>
    <ligand>
        <name>Mg(2+)</name>
        <dbReference type="ChEBI" id="CHEBI:18420"/>
        <label>1</label>
    </ligand>
</feature>
<feature type="binding site" evidence="2">
    <location>
        <position position="84"/>
    </location>
    <ligand>
        <name>Mg(2+)</name>
        <dbReference type="ChEBI" id="CHEBI:18420"/>
        <label>2</label>
    </ligand>
</feature>
<feature type="binding site" evidence="2">
    <location>
        <position position="88"/>
    </location>
    <ligand>
        <name>Mg(2+)</name>
        <dbReference type="ChEBI" id="CHEBI:18420"/>
        <label>1</label>
    </ligand>
</feature>
<feature type="binding site" evidence="2">
    <location>
        <position position="88"/>
    </location>
    <ligand>
        <name>Mg(2+)</name>
        <dbReference type="ChEBI" id="CHEBI:18420"/>
        <label>2</label>
    </ligand>
</feature>
<feature type="binding site" evidence="1">
    <location>
        <position position="93"/>
    </location>
    <ligand>
        <name>all-trans-hexaprenyl diphosphate</name>
        <dbReference type="ChEBI" id="CHEBI:58179"/>
    </ligand>
</feature>
<feature type="binding site" evidence="2">
    <location>
        <position position="94"/>
    </location>
    <ligand>
        <name>isopentenyl diphosphate</name>
        <dbReference type="ChEBI" id="CHEBI:128769"/>
    </ligand>
</feature>
<feature type="binding site" evidence="1">
    <location>
        <position position="170"/>
    </location>
    <ligand>
        <name>all-trans-hexaprenyl diphosphate</name>
        <dbReference type="ChEBI" id="CHEBI:58179"/>
    </ligand>
</feature>
<feature type="binding site" evidence="1">
    <location>
        <position position="171"/>
    </location>
    <ligand>
        <name>all-trans-hexaprenyl diphosphate</name>
        <dbReference type="ChEBI" id="CHEBI:58179"/>
    </ligand>
</feature>
<feature type="binding site" evidence="1">
    <location>
        <position position="208"/>
    </location>
    <ligand>
        <name>all-trans-hexaprenyl diphosphate</name>
        <dbReference type="ChEBI" id="CHEBI:58179"/>
    </ligand>
</feature>
<accession>P55785</accession>
<reference key="1">
    <citation type="journal article" date="1995" name="J. Biol. Chem.">
        <title>Molecular cloning and nucleotide sequences of the genes for two essential proteins constituting a novel enzyme system for heptaprenyl diphosphate synthesis.</title>
        <authorList>
            <person name="Koike-Takeshita A."/>
            <person name="Koyama T."/>
            <person name="Obata S."/>
            <person name="Ogura K."/>
        </authorList>
    </citation>
    <scope>NUCLEOTIDE SEQUENCE [GENOMIC DNA]</scope>
    <source>
        <strain>ATCC 10149 / DSM 6790 / CCM 5965 / CIP 105453 / JCM 11297 / NRS T15</strain>
    </source>
</reference>
<gene>
    <name type="primary">hepT</name>
    <name type="synonym">hepS-2</name>
</gene>
<sequence>MKLKAMYSFLSDDLAAVEEELERAVQSEYGPLGEAALHLLQAGGKRIRPVFVLLAARFGQYDLERMKHVAVALELIHMASLVHDDVIDDADLRRGRPTIKAKWSNRFAMYTGDYLFARSLERMAELGNPRAHQVLAKTIVEVCRGEIEQIKDKYRFDQPLRTYLRRIRRKTALLIAASCQLGALAAGAPEPIVKRLYWFGHYVGMSFQITDDILDFTGTEEQLGKPAGSDLLQGNVTLPVLYALSDERVKAAIAAVGPETDVAEMAAVISAIKRTDAIERSYALSDRYLDKALHLLDGLPMNEARGLLRDLALYIGKRDY</sequence>